<keyword id="KW-0008">Acetylcholine receptor inhibiting toxin</keyword>
<keyword id="KW-0027">Amidation</keyword>
<keyword id="KW-1015">Disulfide bond</keyword>
<keyword id="KW-1213">G-protein coupled receptor impairing toxin</keyword>
<keyword id="KW-0872">Ion channel impairing toxin</keyword>
<keyword id="KW-0528">Neurotoxin</keyword>
<keyword id="KW-0629">Postsynaptic neurotoxin</keyword>
<keyword id="KW-0964">Secreted</keyword>
<keyword id="KW-0800">Toxin</keyword>
<reference key="1">
    <citation type="journal article" date="2007" name="Toxicon">
        <title>From the identification of gene organization of alpha conotoxins to the cloning of novel toxins.</title>
        <authorList>
            <person name="Yuan D.-D."/>
            <person name="Han Y.-H."/>
            <person name="Wang C.-G."/>
            <person name="Chi C.-W."/>
        </authorList>
    </citation>
    <scope>NUCLEOTIDE SEQUENCE [GENOMIC DNA]</scope>
</reference>
<reference key="2">
    <citation type="journal article" date="2016" name="Angew. Chem. Int. Ed.">
        <title>Structure-activity studies of cysteine-rich alpha-conotoxins that inhibit high-voltage-activated calcium channels via GABA(B) receptor activation reveal a minimal functional motif.</title>
        <authorList>
            <person name="Carstens B.B."/>
            <person name="Berecki G."/>
            <person name="Daniel J.T."/>
            <person name="Lee H.S."/>
            <person name="Jackson K.A."/>
            <person name="Tae H.S."/>
            <person name="Sadeghi M."/>
            <person name="Castro J."/>
            <person name="O'Donnell T."/>
            <person name="Deiteren A."/>
            <person name="Brierley S.M."/>
            <person name="Craik D.J."/>
            <person name="Adams D.J."/>
            <person name="Clark R.J."/>
        </authorList>
    </citation>
    <scope>FUNCTION</scope>
    <scope>SYNTHESIS OF 22-37</scope>
    <scope>AMIDATION AT CYS-37</scope>
    <scope>MUTAGENESIS OF 22-GLY--PRO-29; CYS-24; CYS-25; CYS-30 AND 31-ILE--CYS-37</scope>
</reference>
<feature type="propeptide" id="PRO_0000370682" evidence="5">
    <location>
        <begin position="1" status="less than"/>
        <end position="21"/>
    </location>
</feature>
<feature type="peptide" id="PRO_0000370683" description="Alpha-conotoxin-like Pu1.2" evidence="5">
    <location>
        <begin position="22"/>
        <end position="37"/>
    </location>
</feature>
<feature type="propeptide" id="PRO_0000445674" evidence="5">
    <location>
        <begin position="38"/>
        <end position="41"/>
    </location>
</feature>
<feature type="modified residue" description="Cysteine amide" evidence="5">
    <location>
        <position position="37"/>
    </location>
</feature>
<feature type="disulfide bond" evidence="1">
    <location>
        <begin position="24"/>
        <end position="30"/>
    </location>
</feature>
<feature type="disulfide bond" evidence="1">
    <location>
        <begin position="25"/>
        <end position="37"/>
    </location>
</feature>
<feature type="mutagenesis site" description="In Pu1.2(9-16); complete loss of HVA calcium currents inhibition in rat DRG neurons." evidence="3">
    <location>
        <begin position="22"/>
        <end position="29"/>
    </location>
</feature>
<feature type="mutagenesis site" description="In [C3S; C9S]Pu1.2; complete loss of HVA calcium currents inhibition in rat DRG neurons; when associated with S-30." evidence="3">
    <original>C</original>
    <variation>S</variation>
    <location>
        <position position="24"/>
    </location>
</feature>
<feature type="mutagenesis site" description="In [C4S]Pu1.2(1-9); no loss of HVA calcium currents inhibition in rat DRG neurons (this effect could be blocked by the selective GABA(B) receptor antagonist CGP55845) and no inhibition of human alpha-7/CHRNA7 and alpha-9-alpha-10/CHRNA9-CHRNA10 AChR; when associated with 31-I--C-37 del." evidence="3">
    <original>C</original>
    <variation>S</variation>
    <location>
        <position position="25"/>
    </location>
</feature>
<feature type="mutagenesis site" description="In [C3S; C9S]Pu1.2; complete loss of HVA calcium currents inhibition in rat DRG neurons; when associated with S-24." evidence="3">
    <original>C</original>
    <variation>S</variation>
    <location>
        <position position="30"/>
    </location>
</feature>
<feature type="mutagenesis site" description="In [C4S]Pu1.2(1-9); no loss of HVA calcium currents inhibition in rat DRG neurons (this effect could be blocked by the selective GABA(B) receptor antagonist CGP55845) and no inhibition of human alpha-7/CHRNA7 and alpha-9-alpha-10/CHRNA9-CHRNA10 AChR; when associated with S-25." evidence="3">
    <location>
        <begin position="31"/>
        <end position="37"/>
    </location>
</feature>
<feature type="non-terminal residue">
    <location>
        <position position="1"/>
    </location>
</feature>
<proteinExistence type="evidence at protein level"/>
<organism>
    <name type="scientific">Conus pulicarius</name>
    <name type="common">Flea-bitten cone</name>
    <dbReference type="NCBI Taxonomy" id="93154"/>
    <lineage>
        <taxon>Eukaryota</taxon>
        <taxon>Metazoa</taxon>
        <taxon>Spiralia</taxon>
        <taxon>Lophotrochozoa</taxon>
        <taxon>Mollusca</taxon>
        <taxon>Gastropoda</taxon>
        <taxon>Caenogastropoda</taxon>
        <taxon>Neogastropoda</taxon>
        <taxon>Conoidea</taxon>
        <taxon>Conidae</taxon>
        <taxon>Conus</taxon>
    </lineage>
</organism>
<evidence type="ECO:0000250" key="1">
    <source>
        <dbReference type="UniProtKB" id="K8DWB5"/>
    </source>
</evidence>
<evidence type="ECO:0000250" key="2">
    <source>
        <dbReference type="UniProtKB" id="P0CE73"/>
    </source>
</evidence>
<evidence type="ECO:0000269" key="3">
    <source>
    </source>
</evidence>
<evidence type="ECO:0000305" key="4"/>
<evidence type="ECO:0000305" key="5">
    <source>
    </source>
</evidence>
<dbReference type="EMBL" id="DQ311078">
    <property type="protein sequence ID" value="ABD33870.1"/>
    <property type="molecule type" value="Genomic_DNA"/>
</dbReference>
<dbReference type="TCDB" id="8.B.32.1.6">
    <property type="family name" value="the nicotinic acetylcholine receptor-targeting alpha-conotoxin (a-conotoxin) family"/>
</dbReference>
<dbReference type="ConoServer" id="568">
    <property type="toxin name" value="Pu1.2 precursor"/>
</dbReference>
<dbReference type="GO" id="GO:0005576">
    <property type="term" value="C:extracellular region"/>
    <property type="evidence" value="ECO:0007669"/>
    <property type="project" value="UniProtKB-SubCell"/>
</dbReference>
<dbReference type="GO" id="GO:0035792">
    <property type="term" value="C:host cell postsynaptic membrane"/>
    <property type="evidence" value="ECO:0007669"/>
    <property type="project" value="UniProtKB-KW"/>
</dbReference>
<dbReference type="GO" id="GO:0030550">
    <property type="term" value="F:acetylcholine receptor inhibitor activity"/>
    <property type="evidence" value="ECO:0007669"/>
    <property type="project" value="UniProtKB-KW"/>
</dbReference>
<dbReference type="GO" id="GO:0099106">
    <property type="term" value="F:ion channel regulator activity"/>
    <property type="evidence" value="ECO:0007669"/>
    <property type="project" value="UniProtKB-KW"/>
</dbReference>
<dbReference type="GO" id="GO:0090729">
    <property type="term" value="F:toxin activity"/>
    <property type="evidence" value="ECO:0007669"/>
    <property type="project" value="UniProtKB-KW"/>
</dbReference>
<dbReference type="InterPro" id="IPR009958">
    <property type="entry name" value="Conotoxin_a-typ"/>
</dbReference>
<dbReference type="Pfam" id="PF07365">
    <property type="entry name" value="Toxin_8"/>
    <property type="match status" value="1"/>
</dbReference>
<protein>
    <recommendedName>
        <fullName>Alpha-conotoxin-like Pu1.2</fullName>
    </recommendedName>
</protein>
<sequence length="41" mass="4273">LDGRNAAADFETSDLLAMTIRGGCCSYPPCIANNPLCGGKR</sequence>
<accession>A1X8D8</accession>
<comment type="function">
    <text evidence="2 3">Alpha-conotoxins act on postsynaptic membranes, they bind to the nicotinic acetylcholine receptors (nAChR) and thus inhibit them (By similarity). This toxin also inhibits high voltage-activated (HVA) calcium channel currents in rat DRG neurons (27% inhibition at 1 uM toxin) probably by activating GABA(B) receptors (GABBR1 and/or GABBR2) (PubMed:26948522).</text>
</comment>
<comment type="subcellular location">
    <subcellularLocation>
        <location evidence="4">Secreted</location>
    </subcellularLocation>
</comment>
<comment type="tissue specificity">
    <text evidence="4">Expressed by the venom duct.</text>
</comment>
<comment type="domain">
    <text evidence="4">The cysteine framework is I (CC-C-C). Alpha4/6 pattern.</text>
</comment>
<comment type="PTM">
    <text evidence="3">Non-native isomers 'ribbon' (with disulfide connectivity C1-C4, C2-C3) and 'beads' (with disulfide connectivity C1-C2, C3-C4) also inhibit high voltage-activated (HVA) calcium channel currents in rat DRG neurons (25-30% inhibition at 1 uM toxin) (PubMed:26948522).</text>
</comment>
<comment type="PTM">
    <text evidence="3">Mutants Pu1.2(9-16), [C3S; C9S]Pu1.2 and [C4S]Pu1.2(1-9) are all C-terminally amidated.</text>
</comment>
<comment type="miscellaneous">
    <text evidence="3">Negative results: does not inhibit human alpha-7/CHRNA7 and alpha-9-alpha-10/CHRNA9-CHRNA10 acetylcholine receptors (when tested at 3 uM) (PubMed:26948522).</text>
</comment>
<comment type="similarity">
    <text evidence="4">Belongs to the conotoxin A superfamily.</text>
</comment>
<name>CA12_CONPL</name>